<reference key="1">
    <citation type="journal article" date="2005" name="J. Bacteriol.">
        <title>Whole-genome sequence analysis of Pseudomonas syringae pv. phaseolicola 1448A reveals divergence among pathovars in genes involved in virulence and transposition.</title>
        <authorList>
            <person name="Joardar V."/>
            <person name="Lindeberg M."/>
            <person name="Jackson R.W."/>
            <person name="Selengut J."/>
            <person name="Dodson R."/>
            <person name="Brinkac L.M."/>
            <person name="Daugherty S.C."/>
            <person name="DeBoy R.T."/>
            <person name="Durkin A.S."/>
            <person name="Gwinn Giglio M."/>
            <person name="Madupu R."/>
            <person name="Nelson W.C."/>
            <person name="Rosovitz M.J."/>
            <person name="Sullivan S.A."/>
            <person name="Crabtree J."/>
            <person name="Creasy T."/>
            <person name="Davidsen T.M."/>
            <person name="Haft D.H."/>
            <person name="Zafar N."/>
            <person name="Zhou L."/>
            <person name="Halpin R."/>
            <person name="Holley T."/>
            <person name="Khouri H.M."/>
            <person name="Feldblyum T.V."/>
            <person name="White O."/>
            <person name="Fraser C.M."/>
            <person name="Chatterjee A.K."/>
            <person name="Cartinhour S."/>
            <person name="Schneider D."/>
            <person name="Mansfield J.W."/>
            <person name="Collmer A."/>
            <person name="Buell R."/>
        </authorList>
    </citation>
    <scope>NUCLEOTIDE SEQUENCE [LARGE SCALE GENOMIC DNA]</scope>
    <source>
        <strain>1448A / Race 6</strain>
    </source>
</reference>
<protein>
    <recommendedName>
        <fullName evidence="1">Ubiquinone biosynthesis O-methyltransferase</fullName>
    </recommendedName>
    <alternativeName>
        <fullName evidence="1">2-polyprenyl-6-hydroxyphenol methylase</fullName>
        <ecNumber evidence="1">2.1.1.222</ecNumber>
    </alternativeName>
    <alternativeName>
        <fullName evidence="1">3-demethylubiquinone 3-O-methyltransferase</fullName>
        <ecNumber evidence="1">2.1.1.64</ecNumber>
    </alternativeName>
</protein>
<feature type="chain" id="PRO_0000241720" description="Ubiquinone biosynthesis O-methyltransferase">
    <location>
        <begin position="1"/>
        <end position="232"/>
    </location>
</feature>
<feature type="binding site" evidence="1">
    <location>
        <position position="36"/>
    </location>
    <ligand>
        <name>S-adenosyl-L-methionine</name>
        <dbReference type="ChEBI" id="CHEBI:59789"/>
    </ligand>
</feature>
<feature type="binding site" evidence="1">
    <location>
        <position position="55"/>
    </location>
    <ligand>
        <name>S-adenosyl-L-methionine</name>
        <dbReference type="ChEBI" id="CHEBI:59789"/>
    </ligand>
</feature>
<feature type="binding site" evidence="1">
    <location>
        <position position="76"/>
    </location>
    <ligand>
        <name>S-adenosyl-L-methionine</name>
        <dbReference type="ChEBI" id="CHEBI:59789"/>
    </ligand>
</feature>
<feature type="binding site" evidence="1">
    <location>
        <position position="120"/>
    </location>
    <ligand>
        <name>S-adenosyl-L-methionine</name>
        <dbReference type="ChEBI" id="CHEBI:59789"/>
    </ligand>
</feature>
<comment type="function">
    <text evidence="1">O-methyltransferase that catalyzes the 2 O-methylation steps in the ubiquinone biosynthetic pathway.</text>
</comment>
<comment type="catalytic activity">
    <reaction evidence="1">
        <text>a 3-demethylubiquinol + S-adenosyl-L-methionine = a ubiquinol + S-adenosyl-L-homocysteine + H(+)</text>
        <dbReference type="Rhea" id="RHEA:44380"/>
        <dbReference type="Rhea" id="RHEA-COMP:9566"/>
        <dbReference type="Rhea" id="RHEA-COMP:10914"/>
        <dbReference type="ChEBI" id="CHEBI:15378"/>
        <dbReference type="ChEBI" id="CHEBI:17976"/>
        <dbReference type="ChEBI" id="CHEBI:57856"/>
        <dbReference type="ChEBI" id="CHEBI:59789"/>
        <dbReference type="ChEBI" id="CHEBI:84422"/>
        <dbReference type="EC" id="2.1.1.64"/>
    </reaction>
</comment>
<comment type="catalytic activity">
    <reaction evidence="1">
        <text>a 3-(all-trans-polyprenyl)benzene-1,2-diol + S-adenosyl-L-methionine = a 2-methoxy-6-(all-trans-polyprenyl)phenol + S-adenosyl-L-homocysteine + H(+)</text>
        <dbReference type="Rhea" id="RHEA:31411"/>
        <dbReference type="Rhea" id="RHEA-COMP:9550"/>
        <dbReference type="Rhea" id="RHEA-COMP:9551"/>
        <dbReference type="ChEBI" id="CHEBI:15378"/>
        <dbReference type="ChEBI" id="CHEBI:57856"/>
        <dbReference type="ChEBI" id="CHEBI:59789"/>
        <dbReference type="ChEBI" id="CHEBI:62729"/>
        <dbReference type="ChEBI" id="CHEBI:62731"/>
        <dbReference type="EC" id="2.1.1.222"/>
    </reaction>
</comment>
<comment type="pathway">
    <text evidence="1">Cofactor biosynthesis; ubiquinone biosynthesis.</text>
</comment>
<comment type="similarity">
    <text evidence="1">Belongs to the methyltransferase superfamily. UbiG/COQ3 family.</text>
</comment>
<name>UBIG_PSE14</name>
<gene>
    <name evidence="1" type="primary">ubiG</name>
    <name type="ordered locus">PSPPH_3670</name>
</gene>
<dbReference type="EC" id="2.1.1.222" evidence="1"/>
<dbReference type="EC" id="2.1.1.64" evidence="1"/>
<dbReference type="EMBL" id="CP000058">
    <property type="protein sequence ID" value="AAZ34697.1"/>
    <property type="molecule type" value="Genomic_DNA"/>
</dbReference>
<dbReference type="RefSeq" id="WP_003369710.1">
    <property type="nucleotide sequence ID" value="NC_005773.3"/>
</dbReference>
<dbReference type="SMR" id="Q48FM4"/>
<dbReference type="GeneID" id="77279494"/>
<dbReference type="KEGG" id="psp:PSPPH_3670"/>
<dbReference type="eggNOG" id="COG2227">
    <property type="taxonomic scope" value="Bacteria"/>
</dbReference>
<dbReference type="HOGENOM" id="CLU_042432_5_0_6"/>
<dbReference type="UniPathway" id="UPA00232"/>
<dbReference type="Proteomes" id="UP000000551">
    <property type="component" value="Chromosome"/>
</dbReference>
<dbReference type="GO" id="GO:0102208">
    <property type="term" value="F:2-polyprenyl-6-hydroxyphenol methylase activity"/>
    <property type="evidence" value="ECO:0007669"/>
    <property type="project" value="UniProtKB-EC"/>
</dbReference>
<dbReference type="GO" id="GO:0061542">
    <property type="term" value="F:3-demethylubiquinol 3-O-methyltransferase activity"/>
    <property type="evidence" value="ECO:0007669"/>
    <property type="project" value="UniProtKB-UniRule"/>
</dbReference>
<dbReference type="GO" id="GO:0010420">
    <property type="term" value="F:polyprenyldihydroxybenzoate methyltransferase activity"/>
    <property type="evidence" value="ECO:0007669"/>
    <property type="project" value="InterPro"/>
</dbReference>
<dbReference type="GO" id="GO:0032259">
    <property type="term" value="P:methylation"/>
    <property type="evidence" value="ECO:0007669"/>
    <property type="project" value="UniProtKB-KW"/>
</dbReference>
<dbReference type="CDD" id="cd02440">
    <property type="entry name" value="AdoMet_MTases"/>
    <property type="match status" value="1"/>
</dbReference>
<dbReference type="FunFam" id="3.40.50.150:FF:000028">
    <property type="entry name" value="Ubiquinone biosynthesis O-methyltransferase"/>
    <property type="match status" value="1"/>
</dbReference>
<dbReference type="Gene3D" id="3.40.50.150">
    <property type="entry name" value="Vaccinia Virus protein VP39"/>
    <property type="match status" value="1"/>
</dbReference>
<dbReference type="HAMAP" id="MF_00472">
    <property type="entry name" value="UbiG"/>
    <property type="match status" value="1"/>
</dbReference>
<dbReference type="InterPro" id="IPR029063">
    <property type="entry name" value="SAM-dependent_MTases_sf"/>
</dbReference>
<dbReference type="InterPro" id="IPR010233">
    <property type="entry name" value="UbiG_MeTrfase"/>
</dbReference>
<dbReference type="NCBIfam" id="TIGR01983">
    <property type="entry name" value="UbiG"/>
    <property type="match status" value="1"/>
</dbReference>
<dbReference type="PANTHER" id="PTHR43464">
    <property type="entry name" value="METHYLTRANSFERASE"/>
    <property type="match status" value="1"/>
</dbReference>
<dbReference type="PANTHER" id="PTHR43464:SF19">
    <property type="entry name" value="UBIQUINONE BIOSYNTHESIS O-METHYLTRANSFERASE, MITOCHONDRIAL"/>
    <property type="match status" value="1"/>
</dbReference>
<dbReference type="Pfam" id="PF13489">
    <property type="entry name" value="Methyltransf_23"/>
    <property type="match status" value="1"/>
</dbReference>
<dbReference type="SUPFAM" id="SSF53335">
    <property type="entry name" value="S-adenosyl-L-methionine-dependent methyltransferases"/>
    <property type="match status" value="1"/>
</dbReference>
<accession>Q48FM4</accession>
<proteinExistence type="inferred from homology"/>
<keyword id="KW-0489">Methyltransferase</keyword>
<keyword id="KW-0949">S-adenosyl-L-methionine</keyword>
<keyword id="KW-0808">Transferase</keyword>
<keyword id="KW-0831">Ubiquinone biosynthesis</keyword>
<evidence type="ECO:0000255" key="1">
    <source>
        <dbReference type="HAMAP-Rule" id="MF_00472"/>
    </source>
</evidence>
<sequence length="232" mass="25922">MSNVDRAEIAKFEALAHRWWDRESEFKPLHDINPLRVNWIDERVGLAGKKVLDVGCGGGILSEAMALRGATVTGIDMGEAPLAVAQLHQLESGVSVEYRQITAEDMAEEMPEQYDVVTCLEMLEHVPDPSSVIRACYRMVKPGGQVFFSTINRNPKAYLFAVVGAEYILNLLPRGTHDFKKFIRPSELGAWSRDAGLQVKDVIGLTYNPLTKHYKLTSDVGVNYMIQTLREA</sequence>
<organism>
    <name type="scientific">Pseudomonas savastanoi pv. phaseolicola (strain 1448A / Race 6)</name>
    <name type="common">Pseudomonas syringae pv. phaseolicola (strain 1448A / Race 6)</name>
    <dbReference type="NCBI Taxonomy" id="264730"/>
    <lineage>
        <taxon>Bacteria</taxon>
        <taxon>Pseudomonadati</taxon>
        <taxon>Pseudomonadota</taxon>
        <taxon>Gammaproteobacteria</taxon>
        <taxon>Pseudomonadales</taxon>
        <taxon>Pseudomonadaceae</taxon>
        <taxon>Pseudomonas</taxon>
    </lineage>
</organism>